<gene>
    <name type="primary">CPSF160</name>
    <name type="ordered locus">At5g51660</name>
    <name type="ORF">K17N15.21</name>
</gene>
<sequence>MSFAAYKMMHWPTGVENCASGYITHSLSDSTLQIPIVSVHDDIEAEWPNPKRGIGPLPNVVITAANILEVYIVRAQEEGNTQELRNPKLAKRGGVMDGVYGVSLELVCHYRLHGNVESIAVLPMGGGNSSKGRDSIILTFRDAKISVLEFDDSIHSLRMTSMHCFEGPDWLHLKRGRESFPRGPLVKVDPQGRCGGVLVYGLQMIILKTSQVGSGLVGDDDAFSSGGTVSARVESSYIINLRDLEMKHVKDFVFLHGYIEPVIVILQEEEHTWAGRVSWKHHTCVLSALSINSTLKQHPVIWSAINLPHDAYKLLAVPSPIGGVLVLCANTIHYHSQSASCALALNNYASSADSSQELPASNFSVELDAAHGTWISNDVALLSTKSGELLLLTLIYDGRAVQRLDLSKSKASVLASDITSVGNSLFFLGSRLGDSLLVQFSCRSGPAASLPGLRDEDEDIEGEGHQAKRLRMTSDTFQDTIGNEELSLFGSTPNNSDSAQKSFSFAVRDSLVNVGPVKDFAYGLRINADANATGVSKQSNYELVCCSGHGKNGALCVLRQSIRPEMITEVELPGCKGIWTVYHKSSRGHNADSSKMAADEDEYHAYLIISLEARTMVLETADLLTEVTESVDYYVQGRTIAAGNLFGRRRVIQVFEHGARILDGSFMNQELSFGASNSESNSGSESSTVSSVSIADPYVLLRMTDDSIRLLVGDPSTCTVSISSPSVLEGSKRKISACTLYHDKGPEPWLRKASTDAWLSSGVGEAVDSVDGGPQDQGDIYCVVCYESGALEIFDVPSFNCVFSVDKFASGRRHLSDMPIHELEYELNKNSEDNTSSKEIKNTRVVELAMQRWSGHHTRPFLFAVLADGTILCYHAYLFDGVDSTKAENSLSSENPAALNSSGSSKLRNLKFLRIPLDTSTREGTSDGVASQRITMFKNISGHQGFFLSGSRPGWCMLFRERLRFHSQLCDGSIAAFTVLHNVNCNHGFIYVTAQGVLKICQLPSASIYDNYWPVQKIPLKATPHQVTYYAEKNLYPLIVSYPVSKPLNQVLSSLVDQEAGQQLDNHNMSSDDLQRTYTVEEFEIQILEPERSGGPWETKAKIPMQTSEHALTVRVVTLLNASTGENETLLAVGTAYVQGEDVAARGRVLLFSFGKNGDNSQNVVTEVYSRELKGAISAVASIQGHLLISSGPKIILHKWNGTELNGVAFFDAPPLYVVSMNVVKSFILLGDVHKSIYFLSWKEQGSQLSLLAKDFESLDCFATEFLIDGSTLSLAVSDEQKNIQVFYYAPKMIESWKGLKLLSRAEFHVGAHVSKFLRLQMVSSGADKINRFALLFGTLDGSFGCIAPLDEVTFRRLQSLQKKLVDAVPHVAGLNPLAFRQFRSSGKARRSGPDSIVDCELLCHYEMLPLEEQLELAHQIGTTRYSILKDLVDLSVGTSFL</sequence>
<dbReference type="EMBL" id="AY140902">
    <property type="protein sequence ID" value="AAN41460.1"/>
    <property type="molecule type" value="mRNA"/>
</dbReference>
<dbReference type="EMBL" id="AB025607">
    <property type="protein sequence ID" value="BAB11613.1"/>
    <property type="status" value="ALT_SEQ"/>
    <property type="molecule type" value="Genomic_DNA"/>
</dbReference>
<dbReference type="EMBL" id="AB018109">
    <property type="protein sequence ID" value="BAB11613.1"/>
    <property type="status" value="JOINED"/>
    <property type="molecule type" value="Genomic_DNA"/>
</dbReference>
<dbReference type="EMBL" id="CP002688">
    <property type="protein sequence ID" value="AED96112.1"/>
    <property type="molecule type" value="Genomic_DNA"/>
</dbReference>
<dbReference type="RefSeq" id="NP_199979.2">
    <property type="nucleotide sequence ID" value="NM_124545.3"/>
</dbReference>
<dbReference type="SMR" id="Q9FGR0"/>
<dbReference type="BioGRID" id="20485">
    <property type="interactions" value="14"/>
</dbReference>
<dbReference type="DIP" id="DIP-40386N"/>
<dbReference type="FunCoup" id="Q9FGR0">
    <property type="interactions" value="4091"/>
</dbReference>
<dbReference type="IntAct" id="Q9FGR0">
    <property type="interactions" value="5"/>
</dbReference>
<dbReference type="STRING" id="3702.Q9FGR0"/>
<dbReference type="iPTMnet" id="Q9FGR0"/>
<dbReference type="PaxDb" id="3702-AT5G51660.1"/>
<dbReference type="ProteomicsDB" id="224489"/>
<dbReference type="EnsemblPlants" id="AT5G51660.1">
    <property type="protein sequence ID" value="AT5G51660.1"/>
    <property type="gene ID" value="AT5G51660"/>
</dbReference>
<dbReference type="GeneID" id="835240"/>
<dbReference type="Gramene" id="AT5G51660.1">
    <property type="protein sequence ID" value="AT5G51660.1"/>
    <property type="gene ID" value="AT5G51660"/>
</dbReference>
<dbReference type="KEGG" id="ath:AT5G51660"/>
<dbReference type="Araport" id="AT5G51660"/>
<dbReference type="TAIR" id="AT5G51660">
    <property type="gene designation" value="CPSF160"/>
</dbReference>
<dbReference type="eggNOG" id="KOG1896">
    <property type="taxonomic scope" value="Eukaryota"/>
</dbReference>
<dbReference type="HOGENOM" id="CLU_002414_0_0_1"/>
<dbReference type="InParanoid" id="Q9FGR0"/>
<dbReference type="OMA" id="PMTKFKL"/>
<dbReference type="OrthoDB" id="6109at2759"/>
<dbReference type="PhylomeDB" id="Q9FGR0"/>
<dbReference type="PRO" id="PR:Q9FGR0"/>
<dbReference type="Proteomes" id="UP000006548">
    <property type="component" value="Chromosome 5"/>
</dbReference>
<dbReference type="ExpressionAtlas" id="Q9FGR0">
    <property type="expression patterns" value="baseline and differential"/>
</dbReference>
<dbReference type="GO" id="GO:0005634">
    <property type="term" value="C:nucleus"/>
    <property type="evidence" value="ECO:0000314"/>
    <property type="project" value="UniProtKB"/>
</dbReference>
<dbReference type="GO" id="GO:0003723">
    <property type="term" value="F:RNA binding"/>
    <property type="evidence" value="ECO:0007669"/>
    <property type="project" value="UniProtKB-KW"/>
</dbReference>
<dbReference type="GO" id="GO:0006397">
    <property type="term" value="P:mRNA processing"/>
    <property type="evidence" value="ECO:0007669"/>
    <property type="project" value="UniProtKB-KW"/>
</dbReference>
<dbReference type="FunFam" id="2.130.10.10:FF:000402">
    <property type="entry name" value="Cleavage and polyadenylation specificity factor subunit 1"/>
    <property type="match status" value="1"/>
</dbReference>
<dbReference type="FunFam" id="2.130.10.10:FF:000437">
    <property type="entry name" value="cleavage and polyadenylation specificity factor subunit 1"/>
    <property type="match status" value="1"/>
</dbReference>
<dbReference type="Gene3D" id="2.130.10.10">
    <property type="entry name" value="YVTN repeat-like/Quinoprotein amine dehydrogenase"/>
    <property type="match status" value="2"/>
</dbReference>
<dbReference type="InterPro" id="IPR018846">
    <property type="entry name" value="Beta-prop_RSE1/DDB1/CPSF1_1st"/>
</dbReference>
<dbReference type="InterPro" id="IPR004871">
    <property type="entry name" value="Cleavage/polyA-sp_fac_asu_C"/>
</dbReference>
<dbReference type="InterPro" id="IPR050358">
    <property type="entry name" value="RSE1/DDB1/CFT1/CPSF1"/>
</dbReference>
<dbReference type="InterPro" id="IPR015943">
    <property type="entry name" value="WD40/YVTN_repeat-like_dom_sf"/>
</dbReference>
<dbReference type="PANTHER" id="PTHR10644">
    <property type="entry name" value="DNA REPAIR/RNA PROCESSING CPSF FAMILY"/>
    <property type="match status" value="1"/>
</dbReference>
<dbReference type="Pfam" id="PF10433">
    <property type="entry name" value="Beta-prop_RSE1_1st"/>
    <property type="match status" value="1"/>
</dbReference>
<dbReference type="Pfam" id="PF23726">
    <property type="entry name" value="Beta-prop_RSE1_2nd"/>
    <property type="match status" value="1"/>
</dbReference>
<dbReference type="Pfam" id="PF03178">
    <property type="entry name" value="CPSF_A"/>
    <property type="match status" value="1"/>
</dbReference>
<keyword id="KW-0507">mRNA processing</keyword>
<keyword id="KW-0539">Nucleus</keyword>
<keyword id="KW-1185">Reference proteome</keyword>
<keyword id="KW-0694">RNA-binding</keyword>
<accession>Q9FGR0</accession>
<accession>Q8H1T4</accession>
<comment type="function">
    <text evidence="1">CPSF plays a key role in pre-mRNA 3'-end formation, recognizing the AAUAAA signal sequence and interacting with poly(A)polymerase and other factors to bring about cleavage and poly(A) addition. This subunit is involved in the RNA recognition step of the polyadenylation reaction.</text>
</comment>
<comment type="subunit">
    <text evidence="2 3">Component of the CPSF complex, at least composed of CPSF160, CPSF100, CPSF73-I, CPSF73-II, CPSF30, FY and FIPS5. Forms a complex with cleavage and polyadenylation specificity factor (CPSF) subunits FY, CPSF30, CPSF73-I, CPSF 73-II and CPSF100.</text>
</comment>
<comment type="interaction">
    <interactant intactId="EBI-1775436">
        <id>Q9FGR0</id>
    </interactant>
    <interactant intactId="EBI-1775444">
        <id>Q9LKF9</id>
        <label>CPSF100</label>
    </interactant>
    <organismsDiffer>false</organismsDiffer>
    <experiments>4</experiments>
</comment>
<comment type="interaction">
    <interactant intactId="EBI-1775436">
        <id>Q9FGR0</id>
    </interactant>
    <interactant intactId="EBI-1632908">
        <id>Q6NLV4</id>
        <label>FY</label>
    </interactant>
    <organismsDiffer>false</organismsDiffer>
    <experiments>2</experiments>
</comment>
<comment type="subcellular location">
    <subcellularLocation>
        <location evidence="4">Nucleus</location>
    </subcellularLocation>
</comment>
<comment type="similarity">
    <text evidence="5">Belongs to the CPSF1 family.</text>
</comment>
<comment type="sequence caution" evidence="5">
    <conflict type="erroneous gene model prediction">
        <sequence resource="EMBL-CDS" id="BAB11613"/>
    </conflict>
</comment>
<proteinExistence type="evidence at protein level"/>
<reference key="1">
    <citation type="journal article" date="2006" name="Plant Mol. Biol.">
        <title>The 73 kD subunit of the cleavage and polyadenylation specificity factor (CPSF) complex affects reproductive development in Arabidopsis.</title>
        <authorList>
            <person name="Xu R."/>
            <person name="Zhao H."/>
            <person name="Dinkins R.D."/>
            <person name="Cheng X."/>
            <person name="Carberry G."/>
            <person name="Li Q.Q."/>
        </authorList>
    </citation>
    <scope>NUCLEOTIDE SEQUENCE [MRNA]</scope>
</reference>
<reference key="2">
    <citation type="submission" date="1999-04" db="EMBL/GenBank/DDBJ databases">
        <title>Structural analysis of Arabidopsis thaliana chromosome 5. XI.</title>
        <authorList>
            <person name="Kaneko T."/>
            <person name="Katoh T."/>
            <person name="Asamizu E."/>
            <person name="Sato S."/>
            <person name="Nakamura Y."/>
            <person name="Kotani H."/>
            <person name="Tabata S."/>
        </authorList>
    </citation>
    <scope>NUCLEOTIDE SEQUENCE [LARGE SCALE GENOMIC DNA]</scope>
    <source>
        <strain>cv. Columbia</strain>
    </source>
</reference>
<reference key="3">
    <citation type="journal article" date="2000" name="DNA Res.">
        <title>Structural analysis of Arabidopsis thaliana chromosome 5. X. Sequence features of the regions of 3,076,755 bp covered by sixty P1 and TAC clones.</title>
        <authorList>
            <person name="Sato S."/>
            <person name="Nakamura Y."/>
            <person name="Kaneko T."/>
            <person name="Katoh T."/>
            <person name="Asamizu E."/>
            <person name="Kotani H."/>
            <person name="Tabata S."/>
        </authorList>
    </citation>
    <scope>NUCLEOTIDE SEQUENCE [LARGE SCALE GENOMIC DNA]</scope>
    <source>
        <strain>cv. Columbia</strain>
    </source>
</reference>
<reference key="4">
    <citation type="journal article" date="2017" name="Plant J.">
        <title>Araport11: a complete reannotation of the Arabidopsis thaliana reference genome.</title>
        <authorList>
            <person name="Cheng C.Y."/>
            <person name="Krishnakumar V."/>
            <person name="Chan A.P."/>
            <person name="Thibaud-Nissen F."/>
            <person name="Schobel S."/>
            <person name="Town C.D."/>
        </authorList>
    </citation>
    <scope>GENOME REANNOTATION</scope>
    <source>
        <strain>cv. Columbia</strain>
    </source>
</reference>
<reference key="5">
    <citation type="journal article" date="2008" name="BMC Genomics">
        <title>Arabidopsis mRNA polyadenylation machinery: comprehensive analysis of protein-protein interactions and gene expression profiling.</title>
        <authorList>
            <person name="Hunt A.G."/>
            <person name="Xu R."/>
            <person name="Addepalli B."/>
            <person name="Rao S."/>
            <person name="Forbes K.P."/>
            <person name="Meeks L.R."/>
            <person name="Xing D."/>
            <person name="Mo M."/>
            <person name="Zhao H."/>
            <person name="Bandyopadhyay A."/>
            <person name="Dampanaboina L."/>
            <person name="Marion A."/>
            <person name="Von Lanken C."/>
            <person name="Li Q.Q."/>
        </authorList>
    </citation>
    <scope>INTERACTION WITH CPSF30 AND CPSF100</scope>
    <scope>GENE FAMILY</scope>
    <scope>NOMENCLATURE</scope>
</reference>
<reference key="6">
    <citation type="journal article" date="2009" name="BMC Cell Biol.">
        <title>Distinctive interactions of the Arabidopsis homolog of the 30 kD subunit of the cleavage and polyadenylation specificity factor (AtCPSF30) with other polyadenylation factor subunits.</title>
        <authorList>
            <person name="Rao S."/>
            <person name="Dinkins R.D."/>
            <person name="Hunt A.G."/>
        </authorList>
    </citation>
    <scope>SUBCELLULAR LOCATION</scope>
    <scope>INTERACTION WITH CPSF30</scope>
</reference>
<reference key="7">
    <citation type="journal article" date="2009" name="Plant Physiol.">
        <title>Unique features of plant cleavage and polyadenylation specificity factor revealed by proteomic studies.</title>
        <authorList>
            <person name="Zhao H."/>
            <person name="Xing D."/>
            <person name="Li Q.Q."/>
        </authorList>
    </citation>
    <scope>COMPONENT OF CPSF COMPLEX</scope>
</reference>
<reference key="8">
    <citation type="journal article" date="2009" name="Proc. Natl. Acad. Sci. U.S.A.">
        <title>Altered interactions within FY/AtCPSF complexes required for Arabidopsis FCA-mediated chromatin silencing.</title>
        <authorList>
            <person name="Manzano D."/>
            <person name="Marquardt S."/>
            <person name="Jones A.M."/>
            <person name="Baurle I."/>
            <person name="Liu F."/>
            <person name="Dean C."/>
        </authorList>
    </citation>
    <scope>INTERACTION WITH FY</scope>
</reference>
<organism>
    <name type="scientific">Arabidopsis thaliana</name>
    <name type="common">Mouse-ear cress</name>
    <dbReference type="NCBI Taxonomy" id="3702"/>
    <lineage>
        <taxon>Eukaryota</taxon>
        <taxon>Viridiplantae</taxon>
        <taxon>Streptophyta</taxon>
        <taxon>Embryophyta</taxon>
        <taxon>Tracheophyta</taxon>
        <taxon>Spermatophyta</taxon>
        <taxon>Magnoliopsida</taxon>
        <taxon>eudicotyledons</taxon>
        <taxon>Gunneridae</taxon>
        <taxon>Pentapetalae</taxon>
        <taxon>rosids</taxon>
        <taxon>malvids</taxon>
        <taxon>Brassicales</taxon>
        <taxon>Brassicaceae</taxon>
        <taxon>Camelineae</taxon>
        <taxon>Arabidopsis</taxon>
    </lineage>
</organism>
<name>CPSF1_ARATH</name>
<protein>
    <recommendedName>
        <fullName>Cleavage and polyadenylation specificity factor subunit 1</fullName>
    </recommendedName>
    <alternativeName>
        <fullName>Cleavage and polyadenylation specificity factor 160 kDa subunit</fullName>
        <shortName>AtCPSF160</shortName>
        <shortName>CPSF 160 kDa subunit</shortName>
    </alternativeName>
</protein>
<feature type="chain" id="PRO_0000074391" description="Cleavage and polyadenylation specificity factor subunit 1">
    <location>
        <begin position="1"/>
        <end position="1442"/>
    </location>
</feature>
<feature type="sequence conflict" description="In Ref. 1; AAN41460." evidence="5" ref="1">
    <original>N</original>
    <variation>D</variation>
    <location>
        <position position="494"/>
    </location>
</feature>
<feature type="sequence conflict" description="In Ref. 1; AAN41460." evidence="5" ref="1">
    <original>S</original>
    <variation>P</variation>
    <location>
        <position position="893"/>
    </location>
</feature>
<evidence type="ECO:0000250" key="1">
    <source>
        <dbReference type="UniProtKB" id="Q10570"/>
    </source>
</evidence>
<evidence type="ECO:0000269" key="2">
    <source>
    </source>
</evidence>
<evidence type="ECO:0000269" key="3">
    <source>
    </source>
</evidence>
<evidence type="ECO:0000269" key="4">
    <source>
    </source>
</evidence>
<evidence type="ECO:0000305" key="5"/>